<reference key="1">
    <citation type="journal article" date="2016" name="Stand. Genomic Sci.">
        <title>Complete genome sequence of Methanospirillum hungatei type strain JF1.</title>
        <authorList>
            <person name="Gunsalus R.P."/>
            <person name="Cook L.E."/>
            <person name="Crable B."/>
            <person name="Rohlin L."/>
            <person name="McDonald E."/>
            <person name="Mouttaki H."/>
            <person name="Sieber J.R."/>
            <person name="Poweleit N."/>
            <person name="Zhou H."/>
            <person name="Lapidus A.L."/>
            <person name="Daligault H.E."/>
            <person name="Land M."/>
            <person name="Gilna P."/>
            <person name="Ivanova N."/>
            <person name="Kyrpides N."/>
            <person name="Culley D.E."/>
            <person name="McInerney M.J."/>
        </authorList>
    </citation>
    <scope>NUCLEOTIDE SEQUENCE [LARGE SCALE GENOMIC DNA]</scope>
    <source>
        <strain>ATCC 27890 / DSM 864 / NBRC 100397 / JF-1</strain>
    </source>
</reference>
<sequence length="221" mass="24699">MVTPEDLECLKRIALMGGLNTPVFLKTISLGSELGFSPQTASRRLRSLEQQGFISRTLGTDGQQVTITHGGEDALRQEYCDYYRLFGRQEKSLMLNGTVQSGLGEGAYYMSLQPYADQFQRILGFTPFPGTLNIRLLPGATLQRKRLSSAEWKVVQGFESEGRTFGDVRCLPCFIRDVPCGIIIPGRTHYPEELIEVVSPEGLRKRFSLKDGDEVTIEVTL</sequence>
<protein>
    <recommendedName>
        <fullName>Riboflavin kinase</fullName>
        <shortName>RFK</shortName>
        <ecNumber>2.7.1.161</ecNumber>
    </recommendedName>
    <alternativeName>
        <fullName>CTP-dependent riboflavin kinase</fullName>
    </alternativeName>
    <alternativeName>
        <fullName>CTP:riboflavin 5'-phosphotransferase</fullName>
    </alternativeName>
    <alternativeName>
        <fullName>Flavokinase</fullName>
    </alternativeName>
</protein>
<proteinExistence type="inferred from homology"/>
<feature type="chain" id="PRO_0000322091" description="Riboflavin kinase">
    <location>
        <begin position="1"/>
        <end position="221"/>
    </location>
</feature>
<feature type="region of interest" description="H-T-H motif-like">
    <location>
        <begin position="1"/>
        <end position="92"/>
    </location>
</feature>
<feature type="region of interest" description="Riboflavin kinase">
    <location>
        <begin position="93"/>
        <end position="221"/>
    </location>
</feature>
<feature type="binding site" evidence="1">
    <location>
        <begin position="102"/>
        <end position="107"/>
    </location>
    <ligand>
        <name>CDP</name>
        <dbReference type="ChEBI" id="CHEBI:58069"/>
    </ligand>
</feature>
<feature type="binding site" evidence="1">
    <location>
        <position position="131"/>
    </location>
    <ligand>
        <name>Mg(2+)</name>
        <dbReference type="ChEBI" id="CHEBI:18420"/>
    </ligand>
</feature>
<feature type="binding site" evidence="1">
    <location>
        <position position="133"/>
    </location>
    <ligand>
        <name>Mg(2+)</name>
        <dbReference type="ChEBI" id="CHEBI:18420"/>
    </ligand>
</feature>
<feature type="binding site" evidence="1">
    <location>
        <position position="188"/>
    </location>
    <ligand>
        <name>FMN</name>
        <dbReference type="ChEBI" id="CHEBI:58210"/>
    </ligand>
</feature>
<feature type="binding site" evidence="1">
    <location>
        <position position="196"/>
    </location>
    <ligand>
        <name>FMN</name>
        <dbReference type="ChEBI" id="CHEBI:58210"/>
    </ligand>
</feature>
<feature type="binding site" evidence="1">
    <location>
        <begin position="201"/>
        <end position="204"/>
    </location>
    <ligand>
        <name>CDP</name>
        <dbReference type="ChEBI" id="CHEBI:58069"/>
    </ligand>
</feature>
<accession>Q2FPM5</accession>
<organism>
    <name type="scientific">Methanospirillum hungatei JF-1 (strain ATCC 27890 / DSM 864 / NBRC 100397 / JF-1)</name>
    <dbReference type="NCBI Taxonomy" id="323259"/>
    <lineage>
        <taxon>Archaea</taxon>
        <taxon>Methanobacteriati</taxon>
        <taxon>Methanobacteriota</taxon>
        <taxon>Stenosarchaea group</taxon>
        <taxon>Methanomicrobia</taxon>
        <taxon>Methanomicrobiales</taxon>
        <taxon>Methanospirillaceae</taxon>
        <taxon>Methanospirillum</taxon>
    </lineage>
</organism>
<keyword id="KW-0285">Flavoprotein</keyword>
<keyword id="KW-0288">FMN</keyword>
<keyword id="KW-0418">Kinase</keyword>
<keyword id="KW-0460">Magnesium</keyword>
<keyword id="KW-0479">Metal-binding</keyword>
<keyword id="KW-0547">Nucleotide-binding</keyword>
<keyword id="KW-1185">Reference proteome</keyword>
<keyword id="KW-0808">Transferase</keyword>
<gene>
    <name type="primary">ribK</name>
    <name type="ordered locus">Mhun_1259</name>
</gene>
<comment type="function">
    <text evidence="1">Catalyzes the CTP-dependent phosphorylation of riboflavin (vitamin B2) to form flavin mononucleotide (FMN).</text>
</comment>
<comment type="catalytic activity">
    <reaction>
        <text>riboflavin + CTP = CDP + FMN + H(+)</text>
        <dbReference type="Rhea" id="RHEA:25021"/>
        <dbReference type="ChEBI" id="CHEBI:15378"/>
        <dbReference type="ChEBI" id="CHEBI:37563"/>
        <dbReference type="ChEBI" id="CHEBI:57986"/>
        <dbReference type="ChEBI" id="CHEBI:58069"/>
        <dbReference type="ChEBI" id="CHEBI:58210"/>
        <dbReference type="EC" id="2.7.1.161"/>
    </reaction>
</comment>
<comment type="cofactor">
    <cofactor evidence="1">
        <name>Mg(2+)</name>
        <dbReference type="ChEBI" id="CHEBI:18420"/>
    </cofactor>
    <text evidence="1">Binds 1 Mg(2+) ion per subunit.</text>
</comment>
<comment type="pathway">
    <text>Cofactor biosynthesis; FMN biosynthesis; FMN from riboflavin (CTP route): step 1/1.</text>
</comment>
<comment type="similarity">
    <text evidence="2">Belongs to the archaeal riboflavin kinase family.</text>
</comment>
<dbReference type="EC" id="2.7.1.161"/>
<dbReference type="EMBL" id="CP000254">
    <property type="protein sequence ID" value="ABD41003.1"/>
    <property type="molecule type" value="Genomic_DNA"/>
</dbReference>
<dbReference type="RefSeq" id="WP_011448280.1">
    <property type="nucleotide sequence ID" value="NC_007796.1"/>
</dbReference>
<dbReference type="SMR" id="Q2FPM5"/>
<dbReference type="FunCoup" id="Q2FPM5">
    <property type="interactions" value="18"/>
</dbReference>
<dbReference type="STRING" id="323259.Mhun_1259"/>
<dbReference type="EnsemblBacteria" id="ABD41003">
    <property type="protein sequence ID" value="ABD41003"/>
    <property type="gene ID" value="Mhun_1259"/>
</dbReference>
<dbReference type="GeneID" id="3925214"/>
<dbReference type="KEGG" id="mhu:Mhun_1259"/>
<dbReference type="eggNOG" id="arCOG01904">
    <property type="taxonomic scope" value="Archaea"/>
</dbReference>
<dbReference type="HOGENOM" id="CLU_088476_0_0_2"/>
<dbReference type="InParanoid" id="Q2FPM5"/>
<dbReference type="OrthoDB" id="30955at2157"/>
<dbReference type="UniPathway" id="UPA00276">
    <property type="reaction ID" value="UER00929"/>
</dbReference>
<dbReference type="Proteomes" id="UP000001941">
    <property type="component" value="Chromosome"/>
</dbReference>
<dbReference type="GO" id="GO:0003700">
    <property type="term" value="F:DNA-binding transcription factor activity"/>
    <property type="evidence" value="ECO:0007669"/>
    <property type="project" value="InterPro"/>
</dbReference>
<dbReference type="GO" id="GO:0000287">
    <property type="term" value="F:magnesium ion binding"/>
    <property type="evidence" value="ECO:0007669"/>
    <property type="project" value="UniProtKB-UniRule"/>
</dbReference>
<dbReference type="GO" id="GO:0000166">
    <property type="term" value="F:nucleotide binding"/>
    <property type="evidence" value="ECO:0007669"/>
    <property type="project" value="UniProtKB-UniRule"/>
</dbReference>
<dbReference type="GO" id="GO:0008531">
    <property type="term" value="F:riboflavin kinase activity"/>
    <property type="evidence" value="ECO:0007669"/>
    <property type="project" value="InterPro"/>
</dbReference>
<dbReference type="GO" id="GO:0009398">
    <property type="term" value="P:FMN biosynthetic process"/>
    <property type="evidence" value="ECO:0007669"/>
    <property type="project" value="UniProtKB-UniRule"/>
</dbReference>
<dbReference type="GO" id="GO:0009231">
    <property type="term" value="P:riboflavin biosynthetic process"/>
    <property type="evidence" value="ECO:0007669"/>
    <property type="project" value="InterPro"/>
</dbReference>
<dbReference type="Gene3D" id="2.40.30.30">
    <property type="entry name" value="Riboflavin kinase-like"/>
    <property type="match status" value="1"/>
</dbReference>
<dbReference type="Gene3D" id="1.10.10.10">
    <property type="entry name" value="Winged helix-like DNA-binding domain superfamily/Winged helix DNA-binding domain"/>
    <property type="match status" value="1"/>
</dbReference>
<dbReference type="HAMAP" id="MF_01285">
    <property type="entry name" value="Riboflavin_kinase"/>
    <property type="match status" value="1"/>
</dbReference>
<dbReference type="InterPro" id="IPR000835">
    <property type="entry name" value="HTH_MarR-typ"/>
</dbReference>
<dbReference type="InterPro" id="IPR039063">
    <property type="entry name" value="RibK_CTP-dep"/>
</dbReference>
<dbReference type="InterPro" id="IPR023470">
    <property type="entry name" value="Riboflavin_kinase_archaeal"/>
</dbReference>
<dbReference type="InterPro" id="IPR023602">
    <property type="entry name" value="Riboflavin_kinase_CTP-dep"/>
</dbReference>
<dbReference type="InterPro" id="IPR023465">
    <property type="entry name" value="Riboflavin_kinase_dom_sf"/>
</dbReference>
<dbReference type="InterPro" id="IPR036388">
    <property type="entry name" value="WH-like_DNA-bd_sf"/>
</dbReference>
<dbReference type="InterPro" id="IPR036390">
    <property type="entry name" value="WH_DNA-bd_sf"/>
</dbReference>
<dbReference type="PANTHER" id="PTHR40706">
    <property type="entry name" value="RIBOFLAVIN KINASE"/>
    <property type="match status" value="1"/>
</dbReference>
<dbReference type="PANTHER" id="PTHR40706:SF1">
    <property type="entry name" value="RIBOFLAVIN KINASE"/>
    <property type="match status" value="1"/>
</dbReference>
<dbReference type="Pfam" id="PF01982">
    <property type="entry name" value="CTP-dep_RFKase"/>
    <property type="match status" value="1"/>
</dbReference>
<dbReference type="Pfam" id="PF01047">
    <property type="entry name" value="MarR"/>
    <property type="match status" value="1"/>
</dbReference>
<dbReference type="SUPFAM" id="SSF82114">
    <property type="entry name" value="Riboflavin kinase-like"/>
    <property type="match status" value="1"/>
</dbReference>
<dbReference type="SUPFAM" id="SSF46785">
    <property type="entry name" value="Winged helix' DNA-binding domain"/>
    <property type="match status" value="1"/>
</dbReference>
<name>RIFK_METHJ</name>
<evidence type="ECO:0000250" key="1"/>
<evidence type="ECO:0000305" key="2"/>